<proteinExistence type="inferred from homology"/>
<keyword id="KW-0963">Cytoplasm</keyword>
<keyword id="KW-0324">Glycolysis</keyword>
<keyword id="KW-0456">Lyase</keyword>
<keyword id="KW-0460">Magnesium</keyword>
<keyword id="KW-0479">Metal-binding</keyword>
<keyword id="KW-0964">Secreted</keyword>
<dbReference type="EC" id="4.2.1.11" evidence="1"/>
<dbReference type="EMBL" id="AM849034">
    <property type="protein sequence ID" value="CAQ02536.1"/>
    <property type="molecule type" value="Genomic_DNA"/>
</dbReference>
<dbReference type="RefSeq" id="WP_012299725.1">
    <property type="nucleotide sequence ID" value="NZ_MZMN01000003.1"/>
</dbReference>
<dbReference type="SMR" id="B0RH60"/>
<dbReference type="STRING" id="31964.CMS2456"/>
<dbReference type="KEGG" id="cms:CMS2456"/>
<dbReference type="eggNOG" id="COG0148">
    <property type="taxonomic scope" value="Bacteria"/>
</dbReference>
<dbReference type="HOGENOM" id="CLU_031223_2_1_11"/>
<dbReference type="OrthoDB" id="9804716at2"/>
<dbReference type="UniPathway" id="UPA00109">
    <property type="reaction ID" value="UER00187"/>
</dbReference>
<dbReference type="Proteomes" id="UP000001318">
    <property type="component" value="Chromosome"/>
</dbReference>
<dbReference type="GO" id="GO:0009986">
    <property type="term" value="C:cell surface"/>
    <property type="evidence" value="ECO:0007669"/>
    <property type="project" value="UniProtKB-SubCell"/>
</dbReference>
<dbReference type="GO" id="GO:0005576">
    <property type="term" value="C:extracellular region"/>
    <property type="evidence" value="ECO:0007669"/>
    <property type="project" value="UniProtKB-SubCell"/>
</dbReference>
<dbReference type="GO" id="GO:0000015">
    <property type="term" value="C:phosphopyruvate hydratase complex"/>
    <property type="evidence" value="ECO:0007669"/>
    <property type="project" value="InterPro"/>
</dbReference>
<dbReference type="GO" id="GO:0000287">
    <property type="term" value="F:magnesium ion binding"/>
    <property type="evidence" value="ECO:0007669"/>
    <property type="project" value="UniProtKB-UniRule"/>
</dbReference>
<dbReference type="GO" id="GO:0004634">
    <property type="term" value="F:phosphopyruvate hydratase activity"/>
    <property type="evidence" value="ECO:0007669"/>
    <property type="project" value="UniProtKB-UniRule"/>
</dbReference>
<dbReference type="GO" id="GO:0006096">
    <property type="term" value="P:glycolytic process"/>
    <property type="evidence" value="ECO:0007669"/>
    <property type="project" value="UniProtKB-UniRule"/>
</dbReference>
<dbReference type="CDD" id="cd03313">
    <property type="entry name" value="enolase"/>
    <property type="match status" value="1"/>
</dbReference>
<dbReference type="FunFam" id="3.20.20.120:FF:000001">
    <property type="entry name" value="Enolase"/>
    <property type="match status" value="1"/>
</dbReference>
<dbReference type="FunFam" id="3.30.390.10:FF:000001">
    <property type="entry name" value="Enolase"/>
    <property type="match status" value="1"/>
</dbReference>
<dbReference type="Gene3D" id="3.20.20.120">
    <property type="entry name" value="Enolase-like C-terminal domain"/>
    <property type="match status" value="1"/>
</dbReference>
<dbReference type="Gene3D" id="3.30.390.10">
    <property type="entry name" value="Enolase-like, N-terminal domain"/>
    <property type="match status" value="1"/>
</dbReference>
<dbReference type="HAMAP" id="MF_00318">
    <property type="entry name" value="Enolase"/>
    <property type="match status" value="1"/>
</dbReference>
<dbReference type="InterPro" id="IPR000941">
    <property type="entry name" value="Enolase"/>
</dbReference>
<dbReference type="InterPro" id="IPR036849">
    <property type="entry name" value="Enolase-like_C_sf"/>
</dbReference>
<dbReference type="InterPro" id="IPR029017">
    <property type="entry name" value="Enolase-like_N"/>
</dbReference>
<dbReference type="InterPro" id="IPR020810">
    <property type="entry name" value="Enolase_C"/>
</dbReference>
<dbReference type="InterPro" id="IPR020809">
    <property type="entry name" value="Enolase_CS"/>
</dbReference>
<dbReference type="InterPro" id="IPR020811">
    <property type="entry name" value="Enolase_N"/>
</dbReference>
<dbReference type="NCBIfam" id="TIGR01060">
    <property type="entry name" value="eno"/>
    <property type="match status" value="1"/>
</dbReference>
<dbReference type="PANTHER" id="PTHR11902">
    <property type="entry name" value="ENOLASE"/>
    <property type="match status" value="1"/>
</dbReference>
<dbReference type="PANTHER" id="PTHR11902:SF1">
    <property type="entry name" value="ENOLASE"/>
    <property type="match status" value="1"/>
</dbReference>
<dbReference type="Pfam" id="PF00113">
    <property type="entry name" value="Enolase_C"/>
    <property type="match status" value="1"/>
</dbReference>
<dbReference type="Pfam" id="PF03952">
    <property type="entry name" value="Enolase_N"/>
    <property type="match status" value="1"/>
</dbReference>
<dbReference type="PIRSF" id="PIRSF001400">
    <property type="entry name" value="Enolase"/>
    <property type="match status" value="1"/>
</dbReference>
<dbReference type="PRINTS" id="PR00148">
    <property type="entry name" value="ENOLASE"/>
</dbReference>
<dbReference type="SFLD" id="SFLDS00001">
    <property type="entry name" value="Enolase"/>
    <property type="match status" value="1"/>
</dbReference>
<dbReference type="SFLD" id="SFLDF00002">
    <property type="entry name" value="enolase"/>
    <property type="match status" value="1"/>
</dbReference>
<dbReference type="SMART" id="SM01192">
    <property type="entry name" value="Enolase_C"/>
    <property type="match status" value="1"/>
</dbReference>
<dbReference type="SMART" id="SM01193">
    <property type="entry name" value="Enolase_N"/>
    <property type="match status" value="1"/>
</dbReference>
<dbReference type="SUPFAM" id="SSF51604">
    <property type="entry name" value="Enolase C-terminal domain-like"/>
    <property type="match status" value="1"/>
</dbReference>
<dbReference type="SUPFAM" id="SSF54826">
    <property type="entry name" value="Enolase N-terminal domain-like"/>
    <property type="match status" value="1"/>
</dbReference>
<dbReference type="PROSITE" id="PS00164">
    <property type="entry name" value="ENOLASE"/>
    <property type="match status" value="1"/>
</dbReference>
<sequence>MAAIEAVNAREILDSRGNPTVEVEVLLEDGTFTRAAVPSGASTGAFEAYELRDGDAGRYLGKGVQKAVAAVVDEIGPAIQDLDAADQRIIDATMIELDGTENKSRLGANALLGVSLAVAKAAADSAELPLYRYLGGPNAHTLPVPMLNVINGGSHADTNVDIQEFMLLPVGASTFSEGLRWGVETYHALKSLLKKKGLSTGLGDEGGFAPNLDSNRAALDLLMEAIDAAGFTAGKQIALGLDVASSEFYSDGAYTFEGQKVDAAHLTAYFADLVASYPLITIEDPLDEDDWAGYDHFTAELGSKVQIVGDDLFVTNPKRLADGITRGVANSILVKVNQIGTLTETLDAVSLAQRSGYTTVLSHRSGETEDTTIADLAVAVEAGQIKTGAPARSERVAKYNQLLRIEQDLGAAAVYAGRSAFPRFQA</sequence>
<feature type="chain" id="PRO_1000079127" description="Enolase">
    <location>
        <begin position="1"/>
        <end position="426"/>
    </location>
</feature>
<feature type="active site" description="Proton donor" evidence="1">
    <location>
        <position position="205"/>
    </location>
</feature>
<feature type="active site" description="Proton acceptor" evidence="1">
    <location>
        <position position="335"/>
    </location>
</feature>
<feature type="binding site" evidence="1">
    <location>
        <position position="163"/>
    </location>
    <ligand>
        <name>(2R)-2-phosphoglycerate</name>
        <dbReference type="ChEBI" id="CHEBI:58289"/>
    </ligand>
</feature>
<feature type="binding site" evidence="1">
    <location>
        <position position="242"/>
    </location>
    <ligand>
        <name>Mg(2+)</name>
        <dbReference type="ChEBI" id="CHEBI:18420"/>
    </ligand>
</feature>
<feature type="binding site" evidence="1">
    <location>
        <position position="283"/>
    </location>
    <ligand>
        <name>Mg(2+)</name>
        <dbReference type="ChEBI" id="CHEBI:18420"/>
    </ligand>
</feature>
<feature type="binding site" evidence="1">
    <location>
        <position position="310"/>
    </location>
    <ligand>
        <name>Mg(2+)</name>
        <dbReference type="ChEBI" id="CHEBI:18420"/>
    </ligand>
</feature>
<feature type="binding site" evidence="1">
    <location>
        <position position="335"/>
    </location>
    <ligand>
        <name>(2R)-2-phosphoglycerate</name>
        <dbReference type="ChEBI" id="CHEBI:58289"/>
    </ligand>
</feature>
<feature type="binding site" evidence="1">
    <location>
        <position position="364"/>
    </location>
    <ligand>
        <name>(2R)-2-phosphoglycerate</name>
        <dbReference type="ChEBI" id="CHEBI:58289"/>
    </ligand>
</feature>
<feature type="binding site" evidence="1">
    <location>
        <position position="365"/>
    </location>
    <ligand>
        <name>(2R)-2-phosphoglycerate</name>
        <dbReference type="ChEBI" id="CHEBI:58289"/>
    </ligand>
</feature>
<feature type="binding site" evidence="1">
    <location>
        <position position="386"/>
    </location>
    <ligand>
        <name>(2R)-2-phosphoglycerate</name>
        <dbReference type="ChEBI" id="CHEBI:58289"/>
    </ligand>
</feature>
<name>ENO_CLASE</name>
<evidence type="ECO:0000255" key="1">
    <source>
        <dbReference type="HAMAP-Rule" id="MF_00318"/>
    </source>
</evidence>
<comment type="function">
    <text evidence="1">Catalyzes the reversible conversion of 2-phosphoglycerate (2-PG) into phosphoenolpyruvate (PEP). It is essential for the degradation of carbohydrates via glycolysis.</text>
</comment>
<comment type="catalytic activity">
    <reaction evidence="1">
        <text>(2R)-2-phosphoglycerate = phosphoenolpyruvate + H2O</text>
        <dbReference type="Rhea" id="RHEA:10164"/>
        <dbReference type="ChEBI" id="CHEBI:15377"/>
        <dbReference type="ChEBI" id="CHEBI:58289"/>
        <dbReference type="ChEBI" id="CHEBI:58702"/>
        <dbReference type="EC" id="4.2.1.11"/>
    </reaction>
</comment>
<comment type="cofactor">
    <cofactor evidence="1">
        <name>Mg(2+)</name>
        <dbReference type="ChEBI" id="CHEBI:18420"/>
    </cofactor>
    <text evidence="1">Binds a second Mg(2+) ion via substrate during catalysis.</text>
</comment>
<comment type="pathway">
    <text evidence="1">Carbohydrate degradation; glycolysis; pyruvate from D-glyceraldehyde 3-phosphate: step 4/5.</text>
</comment>
<comment type="subcellular location">
    <subcellularLocation>
        <location evidence="1">Cytoplasm</location>
    </subcellularLocation>
    <subcellularLocation>
        <location evidence="1">Secreted</location>
    </subcellularLocation>
    <subcellularLocation>
        <location evidence="1">Cell surface</location>
    </subcellularLocation>
    <text evidence="1">Fractions of enolase are present in both the cytoplasm and on the cell surface.</text>
</comment>
<comment type="similarity">
    <text evidence="1">Belongs to the enolase family.</text>
</comment>
<gene>
    <name evidence="1" type="primary">eno</name>
    <name type="ordered locus">CMS2456</name>
</gene>
<reference key="1">
    <citation type="journal article" date="2008" name="J. Bacteriol.">
        <title>Genome of the actinomycete plant pathogen Clavibacter michiganensis subsp. sepedonicus suggests recent niche adaptation.</title>
        <authorList>
            <person name="Bentley S.D."/>
            <person name="Corton C."/>
            <person name="Brown S.E."/>
            <person name="Barron A."/>
            <person name="Clark L."/>
            <person name="Doggett J."/>
            <person name="Harris B."/>
            <person name="Ormond D."/>
            <person name="Quail M.A."/>
            <person name="May G."/>
            <person name="Francis D."/>
            <person name="Knudson D."/>
            <person name="Parkhill J."/>
            <person name="Ishimaru C.A."/>
        </authorList>
    </citation>
    <scope>NUCLEOTIDE SEQUENCE [LARGE SCALE GENOMIC DNA]</scope>
    <source>
        <strain>ATCC 33113 / DSM 20744 / JCM 9667 / LMG 2889 / ICMP 2535 / C-1</strain>
    </source>
</reference>
<protein>
    <recommendedName>
        <fullName evidence="1">Enolase</fullName>
        <ecNumber evidence="1">4.2.1.11</ecNumber>
    </recommendedName>
    <alternativeName>
        <fullName evidence="1">2-phospho-D-glycerate hydro-lyase</fullName>
    </alternativeName>
    <alternativeName>
        <fullName evidence="1">2-phosphoglycerate dehydratase</fullName>
    </alternativeName>
</protein>
<accession>B0RH60</accession>
<organism>
    <name type="scientific">Clavibacter sepedonicus</name>
    <name type="common">Clavibacter michiganensis subsp. sepedonicus</name>
    <dbReference type="NCBI Taxonomy" id="31964"/>
    <lineage>
        <taxon>Bacteria</taxon>
        <taxon>Bacillati</taxon>
        <taxon>Actinomycetota</taxon>
        <taxon>Actinomycetes</taxon>
        <taxon>Micrococcales</taxon>
        <taxon>Microbacteriaceae</taxon>
        <taxon>Clavibacter</taxon>
    </lineage>
</organism>